<dbReference type="EC" id="2.7.1.30"/>
<dbReference type="EMBL" id="X78711">
    <property type="protein sequence ID" value="CAA55364.1"/>
    <property type="molecule type" value="mRNA"/>
</dbReference>
<dbReference type="EMBL" id="AC107059">
    <property type="status" value="NOT_ANNOTATED_CDS"/>
    <property type="molecule type" value="Genomic_DNA"/>
</dbReference>
<dbReference type="EMBL" id="BC066960">
    <property type="status" value="NOT_ANNOTATED_CDS"/>
    <property type="molecule type" value="mRNA"/>
</dbReference>
<dbReference type="RefSeq" id="NP_001382882.1">
    <property type="nucleotide sequence ID" value="NM_001395953.1"/>
</dbReference>
<dbReference type="SMR" id="Q14409"/>
<dbReference type="FunCoup" id="Q14409">
    <property type="interactions" value="562"/>
</dbReference>
<dbReference type="IntAct" id="Q14409">
    <property type="interactions" value="12"/>
</dbReference>
<dbReference type="STRING" id="9606.ENSP00000489687"/>
<dbReference type="iPTMnet" id="Q14409"/>
<dbReference type="PhosphoSitePlus" id="Q14409"/>
<dbReference type="SwissPalm" id="Q14409"/>
<dbReference type="BioMuta" id="GK3P"/>
<dbReference type="DMDM" id="215277039"/>
<dbReference type="jPOST" id="Q14409"/>
<dbReference type="MassIVE" id="Q14409"/>
<dbReference type="PeptideAtlas" id="Q14409"/>
<dbReference type="ProteomicsDB" id="59984"/>
<dbReference type="Pumba" id="Q14409"/>
<dbReference type="Antibodypedia" id="82498">
    <property type="antibodies" value="18 antibodies from 7 providers"/>
</dbReference>
<dbReference type="Ensembl" id="ENST00000505354.3">
    <property type="protein sequence ID" value="ENSP00000489687.1"/>
    <property type="gene ID" value="ENSG00000229894.5"/>
</dbReference>
<dbReference type="GeneID" id="2713"/>
<dbReference type="MANE-Select" id="ENST00000505354.3">
    <property type="protein sequence ID" value="ENSP00000489687.1"/>
    <property type="RefSeq nucleotide sequence ID" value="NM_001395953.1"/>
    <property type="RefSeq protein sequence ID" value="NP_001382882.1"/>
</dbReference>
<dbReference type="AGR" id="HGNC:4292"/>
<dbReference type="GeneCards" id="GK3"/>
<dbReference type="HGNC" id="HGNC:4292">
    <property type="gene designation" value="GK3"/>
</dbReference>
<dbReference type="HPA" id="ENSG00000229894">
    <property type="expression patterns" value="Tissue enriched (testis)"/>
</dbReference>
<dbReference type="MIM" id="600149">
    <property type="type" value="gene"/>
</dbReference>
<dbReference type="neXtProt" id="NX_Q14409"/>
<dbReference type="OpenTargets" id="ENSG00000229894"/>
<dbReference type="PharmGKB" id="PA28703"/>
<dbReference type="VEuPathDB" id="HostDB:ENSG00000229894"/>
<dbReference type="GeneTree" id="ENSGT01000000214434"/>
<dbReference type="InParanoid" id="Q14409"/>
<dbReference type="OMA" id="VLEATSW"/>
<dbReference type="OrthoDB" id="5422795at2759"/>
<dbReference type="PAN-GO" id="Q14409">
    <property type="GO annotations" value="6 GO annotations based on evolutionary models"/>
</dbReference>
<dbReference type="PhylomeDB" id="Q14409"/>
<dbReference type="PathwayCommons" id="Q14409"/>
<dbReference type="Reactome" id="R-HSA-75109">
    <property type="pathway name" value="Triglyceride biosynthesis"/>
</dbReference>
<dbReference type="SignaLink" id="Q14409"/>
<dbReference type="UniPathway" id="UPA00618">
    <property type="reaction ID" value="UER00672"/>
</dbReference>
<dbReference type="Pharos" id="Q14409">
    <property type="development level" value="Tdark"/>
</dbReference>
<dbReference type="PRO" id="PR:Q14409"/>
<dbReference type="Proteomes" id="UP000005640">
    <property type="component" value="Chromosome 4"/>
</dbReference>
<dbReference type="RNAct" id="Q14409">
    <property type="molecule type" value="protein"/>
</dbReference>
<dbReference type="Bgee" id="ENSG00000229894">
    <property type="expression patterns" value="Expressed in male germ line stem cell (sensu Vertebrata) in testis and 26 other cell types or tissues"/>
</dbReference>
<dbReference type="GO" id="GO:0005741">
    <property type="term" value="C:mitochondrial outer membrane"/>
    <property type="evidence" value="ECO:0007669"/>
    <property type="project" value="UniProtKB-SubCell"/>
</dbReference>
<dbReference type="GO" id="GO:0005739">
    <property type="term" value="C:mitochondrion"/>
    <property type="evidence" value="ECO:0006056"/>
    <property type="project" value="FlyBase"/>
</dbReference>
<dbReference type="GO" id="GO:0005524">
    <property type="term" value="F:ATP binding"/>
    <property type="evidence" value="ECO:0007669"/>
    <property type="project" value="UniProtKB-KW"/>
</dbReference>
<dbReference type="GO" id="GO:0004370">
    <property type="term" value="F:glycerol kinase activity"/>
    <property type="evidence" value="ECO:0000318"/>
    <property type="project" value="GO_Central"/>
</dbReference>
<dbReference type="GO" id="GO:0019563">
    <property type="term" value="P:glycerol catabolic process"/>
    <property type="evidence" value="ECO:0007669"/>
    <property type="project" value="UniProtKB-UniPathway"/>
</dbReference>
<dbReference type="GO" id="GO:0006071">
    <property type="term" value="P:glycerol metabolic process"/>
    <property type="evidence" value="ECO:0000318"/>
    <property type="project" value="GO_Central"/>
</dbReference>
<dbReference type="GO" id="GO:0046167">
    <property type="term" value="P:glycerol-3-phosphate biosynthetic process"/>
    <property type="evidence" value="ECO:0000318"/>
    <property type="project" value="GO_Central"/>
</dbReference>
<dbReference type="GO" id="GO:0006641">
    <property type="term" value="P:triglyceride metabolic process"/>
    <property type="evidence" value="ECO:0000318"/>
    <property type="project" value="GO_Central"/>
</dbReference>
<dbReference type="CDD" id="cd07792">
    <property type="entry name" value="ASKHA_NBD_FGGY_GK1-3-like"/>
    <property type="match status" value="1"/>
</dbReference>
<dbReference type="FunFam" id="3.30.420.40:FF:000043">
    <property type="entry name" value="glycerol kinase isoform X1"/>
    <property type="match status" value="1"/>
</dbReference>
<dbReference type="FunFam" id="3.30.420.40:FF:000033">
    <property type="entry name" value="glycerol kinase isoform X2"/>
    <property type="match status" value="1"/>
</dbReference>
<dbReference type="Gene3D" id="3.30.420.40">
    <property type="match status" value="2"/>
</dbReference>
<dbReference type="InterPro" id="IPR043129">
    <property type="entry name" value="ATPase_NBD"/>
</dbReference>
<dbReference type="InterPro" id="IPR000577">
    <property type="entry name" value="Carb_kinase_FGGY"/>
</dbReference>
<dbReference type="InterPro" id="IPR018483">
    <property type="entry name" value="Carb_kinase_FGGY_CS"/>
</dbReference>
<dbReference type="InterPro" id="IPR018485">
    <property type="entry name" value="FGGY_C"/>
</dbReference>
<dbReference type="InterPro" id="IPR018484">
    <property type="entry name" value="FGGY_N"/>
</dbReference>
<dbReference type="InterPro" id="IPR042018">
    <property type="entry name" value="GK1-3_metazoan-type"/>
</dbReference>
<dbReference type="InterPro" id="IPR005999">
    <property type="entry name" value="Glycerol_kin"/>
</dbReference>
<dbReference type="NCBIfam" id="TIGR01311">
    <property type="entry name" value="glycerol_kin"/>
    <property type="match status" value="1"/>
</dbReference>
<dbReference type="NCBIfam" id="NF000756">
    <property type="entry name" value="PRK00047.1"/>
    <property type="match status" value="1"/>
</dbReference>
<dbReference type="PANTHER" id="PTHR10196:SF95">
    <property type="entry name" value="GLYCEROL KINASE 3"/>
    <property type="match status" value="1"/>
</dbReference>
<dbReference type="PANTHER" id="PTHR10196">
    <property type="entry name" value="SUGAR KINASE"/>
    <property type="match status" value="1"/>
</dbReference>
<dbReference type="Pfam" id="PF02782">
    <property type="entry name" value="FGGY_C"/>
    <property type="match status" value="1"/>
</dbReference>
<dbReference type="Pfam" id="PF00370">
    <property type="entry name" value="FGGY_N"/>
    <property type="match status" value="1"/>
</dbReference>
<dbReference type="PIRSF" id="PIRSF000538">
    <property type="entry name" value="GlpK"/>
    <property type="match status" value="1"/>
</dbReference>
<dbReference type="SUPFAM" id="SSF53067">
    <property type="entry name" value="Actin-like ATPase domain"/>
    <property type="match status" value="2"/>
</dbReference>
<dbReference type="PROSITE" id="PS00933">
    <property type="entry name" value="FGGY_KINASES_1"/>
    <property type="match status" value="1"/>
</dbReference>
<dbReference type="PROSITE" id="PS00445">
    <property type="entry name" value="FGGY_KINASES_2"/>
    <property type="match status" value="1"/>
</dbReference>
<proteinExistence type="evidence at protein level"/>
<gene>
    <name evidence="3" type="primary">GK3</name>
    <name type="synonym">GK3P</name>
    <name type="synonym">GKP3</name>
    <name type="synonym">GKTB</name>
</gene>
<organism>
    <name type="scientific">Homo sapiens</name>
    <name type="common">Human</name>
    <dbReference type="NCBI Taxonomy" id="9606"/>
    <lineage>
        <taxon>Eukaryota</taxon>
        <taxon>Metazoa</taxon>
        <taxon>Chordata</taxon>
        <taxon>Craniata</taxon>
        <taxon>Vertebrata</taxon>
        <taxon>Euteleostomi</taxon>
        <taxon>Mammalia</taxon>
        <taxon>Eutheria</taxon>
        <taxon>Euarchontoglires</taxon>
        <taxon>Primates</taxon>
        <taxon>Haplorrhini</taxon>
        <taxon>Catarrhini</taxon>
        <taxon>Hominidae</taxon>
        <taxon>Homo</taxon>
    </lineage>
</organism>
<protein>
    <recommendedName>
        <fullName evidence="2">Glycerol kinase 3</fullName>
        <shortName>GK 3</shortName>
        <shortName>Glycerokinase 3</shortName>
        <ecNumber>2.7.1.30</ecNumber>
    </recommendedName>
    <alternativeName>
        <fullName>ATP:glycerol 3-phosphotransferase 3</fullName>
    </alternativeName>
    <alternativeName>
        <fullName evidence="3">Glycerol kinase 3 pseudogene</fullName>
    </alternativeName>
    <alternativeName>
        <fullName>Glycerol kinase, testis specific 1</fullName>
    </alternativeName>
</protein>
<keyword id="KW-0067">ATP-binding</keyword>
<keyword id="KW-0963">Cytoplasm</keyword>
<keyword id="KW-0319">Glycerol metabolism</keyword>
<keyword id="KW-0418">Kinase</keyword>
<keyword id="KW-0472">Membrane</keyword>
<keyword id="KW-0496">Mitochondrion</keyword>
<keyword id="KW-1000">Mitochondrion outer membrane</keyword>
<keyword id="KW-0547">Nucleotide-binding</keyword>
<keyword id="KW-1267">Proteomics identification</keyword>
<keyword id="KW-1185">Reference proteome</keyword>
<keyword id="KW-0808">Transferase</keyword>
<name>GLPK3_HUMAN</name>
<evidence type="ECO:0000250" key="1"/>
<evidence type="ECO:0000305" key="2"/>
<evidence type="ECO:0000312" key="3">
    <source>
        <dbReference type="HGNC" id="HGNC:4292"/>
    </source>
</evidence>
<reference key="1">
    <citation type="journal article" date="1994" name="Hum. Mol. Genet.">
        <title>The glycerol kinase gene family: structure of the Xp gene, and related intronless retroposons.</title>
        <authorList>
            <person name="Sargent C.A."/>
            <person name="Young C."/>
            <person name="Marsh S."/>
            <person name="Ferguson-Smith M.A."/>
            <person name="Affara N.A."/>
        </authorList>
    </citation>
    <scope>NUCLEOTIDE SEQUENCE [MRNA]</scope>
    <source>
        <tissue>Testis</tissue>
    </source>
</reference>
<reference key="2">
    <citation type="journal article" date="2005" name="Nature">
        <title>Generation and annotation of the DNA sequences of human chromosomes 2 and 4.</title>
        <authorList>
            <person name="Hillier L.W."/>
            <person name="Graves T.A."/>
            <person name="Fulton R.S."/>
            <person name="Fulton L.A."/>
            <person name="Pepin K.H."/>
            <person name="Minx P."/>
            <person name="Wagner-McPherson C."/>
            <person name="Layman D."/>
            <person name="Wylie K."/>
            <person name="Sekhon M."/>
            <person name="Becker M.C."/>
            <person name="Fewell G.A."/>
            <person name="Delehaunty K.D."/>
            <person name="Miner T.L."/>
            <person name="Nash W.E."/>
            <person name="Kremitzki C."/>
            <person name="Oddy L."/>
            <person name="Du H."/>
            <person name="Sun H."/>
            <person name="Bradshaw-Cordum H."/>
            <person name="Ali J."/>
            <person name="Carter J."/>
            <person name="Cordes M."/>
            <person name="Harris A."/>
            <person name="Isak A."/>
            <person name="van Brunt A."/>
            <person name="Nguyen C."/>
            <person name="Du F."/>
            <person name="Courtney L."/>
            <person name="Kalicki J."/>
            <person name="Ozersky P."/>
            <person name="Abbott S."/>
            <person name="Armstrong J."/>
            <person name="Belter E.A."/>
            <person name="Caruso L."/>
            <person name="Cedroni M."/>
            <person name="Cotton M."/>
            <person name="Davidson T."/>
            <person name="Desai A."/>
            <person name="Elliott G."/>
            <person name="Erb T."/>
            <person name="Fronick C."/>
            <person name="Gaige T."/>
            <person name="Haakenson W."/>
            <person name="Haglund K."/>
            <person name="Holmes A."/>
            <person name="Harkins R."/>
            <person name="Kim K."/>
            <person name="Kruchowski S.S."/>
            <person name="Strong C.M."/>
            <person name="Grewal N."/>
            <person name="Goyea E."/>
            <person name="Hou S."/>
            <person name="Levy A."/>
            <person name="Martinka S."/>
            <person name="Mead K."/>
            <person name="McLellan M.D."/>
            <person name="Meyer R."/>
            <person name="Randall-Maher J."/>
            <person name="Tomlinson C."/>
            <person name="Dauphin-Kohlberg S."/>
            <person name="Kozlowicz-Reilly A."/>
            <person name="Shah N."/>
            <person name="Swearengen-Shahid S."/>
            <person name="Snider J."/>
            <person name="Strong J.T."/>
            <person name="Thompson J."/>
            <person name="Yoakum M."/>
            <person name="Leonard S."/>
            <person name="Pearman C."/>
            <person name="Trani L."/>
            <person name="Radionenko M."/>
            <person name="Waligorski J.E."/>
            <person name="Wang C."/>
            <person name="Rock S.M."/>
            <person name="Tin-Wollam A.-M."/>
            <person name="Maupin R."/>
            <person name="Latreille P."/>
            <person name="Wendl M.C."/>
            <person name="Yang S.-P."/>
            <person name="Pohl C."/>
            <person name="Wallis J.W."/>
            <person name="Spieth J."/>
            <person name="Bieri T.A."/>
            <person name="Berkowicz N."/>
            <person name="Nelson J.O."/>
            <person name="Osborne J."/>
            <person name="Ding L."/>
            <person name="Meyer R."/>
            <person name="Sabo A."/>
            <person name="Shotland Y."/>
            <person name="Sinha P."/>
            <person name="Wohldmann P.E."/>
            <person name="Cook L.L."/>
            <person name="Hickenbotham M.T."/>
            <person name="Eldred J."/>
            <person name="Williams D."/>
            <person name="Jones T.A."/>
            <person name="She X."/>
            <person name="Ciccarelli F.D."/>
            <person name="Izaurralde E."/>
            <person name="Taylor J."/>
            <person name="Schmutz J."/>
            <person name="Myers R.M."/>
            <person name="Cox D.R."/>
            <person name="Huang X."/>
            <person name="McPherson J.D."/>
            <person name="Mardis E.R."/>
            <person name="Clifton S.W."/>
            <person name="Warren W.C."/>
            <person name="Chinwalla A.T."/>
            <person name="Eddy S.R."/>
            <person name="Marra M.A."/>
            <person name="Ovcharenko I."/>
            <person name="Furey T.S."/>
            <person name="Miller W."/>
            <person name="Eichler E.E."/>
            <person name="Bork P."/>
            <person name="Suyama M."/>
            <person name="Torrents D."/>
            <person name="Waterston R.H."/>
            <person name="Wilson R.K."/>
        </authorList>
    </citation>
    <scope>NUCLEOTIDE SEQUENCE [LARGE SCALE GENOMIC DNA]</scope>
</reference>
<reference key="3">
    <citation type="journal article" date="2004" name="Genome Res.">
        <title>The status, quality, and expansion of the NIH full-length cDNA project: the Mammalian Gene Collection (MGC).</title>
        <authorList>
            <consortium name="The MGC Project Team"/>
        </authorList>
    </citation>
    <scope>NUCLEOTIDE SEQUENCE [LARGE SCALE MRNA]</scope>
    <source>
        <tissue>Brain</tissue>
    </source>
</reference>
<sequence>MAASKKAVLGPLVGAVDQGTSSTRFLVFNSRTAELLSHHQVEIKQEFPREGWVEQDPKEILHSVYECIEKTCEKLGQLNIGISNIKAIGVSNQRETTVVWDKITGEPLYNAVVWLDLRTQSTVESLSKRIPGNNNFVKSKTGLPLSTYFSAVKLRWLLDNVRKVQKAVEEKRALFGTIDSWLIWSLTGGVNGGVHCTDVTNASRTMLFNIHSLEWDKQLCEFFGIPMEILPHVRSSSEIYGLMKAGALEGVPISGCLGDQSAALVGQMCFQIGQAKNTYGTGCFLLCNTGHKCVFSDHGLLTTVAYKLGRDKPVYYALEGSVAIAGAVIRWLRDNLGIIKTSEEIEKLAKEVGTSYGCYFVPAFSGLYAPYWEPSARGIICGLTQFTNKCHIAFAALEAVCFQTREILDAMNRDCGIPLSHLQVDGGMTSNKILMQLQADILYIPVVKPLMPETTALGAAMAAGAAEGVDVWSLEPEDLSAVTMERFEPQINAEESEIRYSTWKKAVMKSMGWVTTQSPEGGDPSVFCSLPLGFFIVSSMAMLIGARYISGIP</sequence>
<accession>Q14409</accession>
<accession>Q6NXP9</accession>
<feature type="chain" id="PRO_0000059537" description="Glycerol kinase 3">
    <location>
        <begin position="1"/>
        <end position="553"/>
    </location>
</feature>
<feature type="binding site" evidence="1">
    <location>
        <position position="20"/>
    </location>
    <ligand>
        <name>substrate</name>
    </ligand>
</feature>
<feature type="binding site" evidence="1">
    <location>
        <position position="24"/>
    </location>
    <ligand>
        <name>ATP</name>
        <dbReference type="ChEBI" id="CHEBI:30616"/>
    </ligand>
</feature>
<feature type="binding site" evidence="1">
    <location>
        <position position="94"/>
    </location>
    <ligand>
        <name>substrate</name>
    </ligand>
</feature>
<feature type="binding site" evidence="1">
    <location>
        <position position="148"/>
    </location>
    <ligand>
        <name>substrate</name>
    </ligand>
</feature>
<feature type="binding site" evidence="1">
    <location>
        <position position="259"/>
    </location>
    <ligand>
        <name>substrate</name>
    </ligand>
</feature>
<feature type="binding site" evidence="1">
    <location>
        <position position="281"/>
    </location>
    <ligand>
        <name>ATP</name>
        <dbReference type="ChEBI" id="CHEBI:30616"/>
    </ligand>
</feature>
<feature type="binding site" evidence="1">
    <location>
        <position position="326"/>
    </location>
    <ligand>
        <name>ATP</name>
        <dbReference type="ChEBI" id="CHEBI:30616"/>
    </ligand>
</feature>
<feature type="binding site" evidence="1">
    <location>
        <begin position="427"/>
        <end position="431"/>
    </location>
    <ligand>
        <name>ATP</name>
        <dbReference type="ChEBI" id="CHEBI:30616"/>
    </ligand>
</feature>
<feature type="sequence conflict" description="In Ref. 1; CAA55364." evidence="2" ref="1">
    <original>V</original>
    <variation>A</variation>
    <location>
        <position position="99"/>
    </location>
</feature>
<feature type="sequence conflict" description="In Ref. 3; BC066960." evidence="2" ref="3">
    <original>E</original>
    <variation>K</variation>
    <location>
        <position position="485"/>
    </location>
</feature>
<comment type="function">
    <text evidence="2">May be involved in the regulation of glycerol uptake and metabolism.</text>
</comment>
<comment type="catalytic activity">
    <reaction>
        <text>glycerol + ATP = sn-glycerol 3-phosphate + ADP + H(+)</text>
        <dbReference type="Rhea" id="RHEA:21644"/>
        <dbReference type="ChEBI" id="CHEBI:15378"/>
        <dbReference type="ChEBI" id="CHEBI:17754"/>
        <dbReference type="ChEBI" id="CHEBI:30616"/>
        <dbReference type="ChEBI" id="CHEBI:57597"/>
        <dbReference type="ChEBI" id="CHEBI:456216"/>
        <dbReference type="EC" id="2.7.1.30"/>
    </reaction>
</comment>
<comment type="pathway">
    <text>Polyol metabolism; glycerol degradation via glycerol kinase pathway; sn-glycerol 3-phosphate from glycerol: step 1/1.</text>
</comment>
<comment type="subcellular location">
    <subcellularLocation>
        <location evidence="1">Mitochondrion outer membrane</location>
        <topology evidence="1">Peripheral membrane protein</topology>
        <orientation evidence="1">Cytoplasmic side</orientation>
    </subcellularLocation>
    <subcellularLocation>
        <location evidence="1">Cytoplasm</location>
    </subcellularLocation>
</comment>
<comment type="similarity">
    <text evidence="2">Belongs to the FGGY kinase family.</text>
</comment>